<feature type="chain" id="PRO_0000313411" description="DNA ligase">
    <location>
        <begin position="1"/>
        <end position="726"/>
    </location>
</feature>
<feature type="domain" description="BRCT" evidence="1">
    <location>
        <begin position="608"/>
        <end position="698"/>
    </location>
</feature>
<feature type="region of interest" description="Disordered" evidence="2">
    <location>
        <begin position="690"/>
        <end position="726"/>
    </location>
</feature>
<feature type="active site" description="N6-AMP-lysine intermediate" evidence="1">
    <location>
        <position position="117"/>
    </location>
</feature>
<feature type="binding site" evidence="1">
    <location>
        <begin position="34"/>
        <end position="38"/>
    </location>
    <ligand>
        <name>NAD(+)</name>
        <dbReference type="ChEBI" id="CHEBI:57540"/>
    </ligand>
</feature>
<feature type="binding site" evidence="1">
    <location>
        <begin position="83"/>
        <end position="84"/>
    </location>
    <ligand>
        <name>NAD(+)</name>
        <dbReference type="ChEBI" id="CHEBI:57540"/>
    </ligand>
</feature>
<feature type="binding site" evidence="1">
    <location>
        <position position="115"/>
    </location>
    <ligand>
        <name>NAD(+)</name>
        <dbReference type="ChEBI" id="CHEBI:57540"/>
    </ligand>
</feature>
<feature type="binding site" evidence="1">
    <location>
        <position position="138"/>
    </location>
    <ligand>
        <name>NAD(+)</name>
        <dbReference type="ChEBI" id="CHEBI:57540"/>
    </ligand>
</feature>
<feature type="binding site" evidence="1">
    <location>
        <position position="190"/>
    </location>
    <ligand>
        <name>NAD(+)</name>
        <dbReference type="ChEBI" id="CHEBI:57540"/>
    </ligand>
</feature>
<feature type="binding site" evidence="1">
    <location>
        <position position="306"/>
    </location>
    <ligand>
        <name>NAD(+)</name>
        <dbReference type="ChEBI" id="CHEBI:57540"/>
    </ligand>
</feature>
<feature type="binding site" evidence="1">
    <location>
        <position position="330"/>
    </location>
    <ligand>
        <name>NAD(+)</name>
        <dbReference type="ChEBI" id="CHEBI:57540"/>
    </ligand>
</feature>
<feature type="binding site" evidence="1">
    <location>
        <position position="424"/>
    </location>
    <ligand>
        <name>Zn(2+)</name>
        <dbReference type="ChEBI" id="CHEBI:29105"/>
    </ligand>
</feature>
<feature type="binding site" evidence="1">
    <location>
        <position position="427"/>
    </location>
    <ligand>
        <name>Zn(2+)</name>
        <dbReference type="ChEBI" id="CHEBI:29105"/>
    </ligand>
</feature>
<feature type="binding site" evidence="1">
    <location>
        <position position="442"/>
    </location>
    <ligand>
        <name>Zn(2+)</name>
        <dbReference type="ChEBI" id="CHEBI:29105"/>
    </ligand>
</feature>
<feature type="binding site" evidence="1">
    <location>
        <position position="448"/>
    </location>
    <ligand>
        <name>Zn(2+)</name>
        <dbReference type="ChEBI" id="CHEBI:29105"/>
    </ligand>
</feature>
<protein>
    <recommendedName>
        <fullName evidence="1">DNA ligase</fullName>
        <ecNumber evidence="1">6.5.1.2</ecNumber>
    </recommendedName>
    <alternativeName>
        <fullName evidence="1">Polydeoxyribonucleotide synthase [NAD(+)]</fullName>
    </alternativeName>
</protein>
<sequence length="726" mass="78636">MNNDHLTRRVEALREQIRYHNYRYYVLDEPVISDAEYDALMRELRALEAAHPELVTPDSPTQRVGAPPGEQFAKVQHVVPMLSLANASDEAEVRAWYDRVVRLLGNDARVAFVVEPKIDGLAVTLIYRNGILVRGATRGDGETGEDVTANLRTIPGIPLRLGAFASNPEGQTNGAPVQAVIPPLIEVRGEVYMRIADFLRLNEQLAASGEKVAANPRNAAAGSLRQKDPAITARRPLRFFAYGIGQIEGVQVQTQWETLNLLRTLGFPVNRDARRFERLDDALAYCREWMTRRDELEYEVDGVVIKIDSLAQQAQLGVVGRDPRWAIAFKFPAREAVSRLIDIVVNVGRTGVITPNAVIEPVNIGGVTVRNASLHNADYIAERDIRIGDYVIVKRAGDVIPYIVGPIVARRDGSERPWQMPATCPACGTPLERAEGEVAYRCPNFGICPAQITRRIEHFVSRGAMDIAGIGEKQVQLFVERGWVQDVADLYTLTPDHFANVEGYGPKRVANLLSAIAGSKNRPLHRLIVGLGIRYVGEVVAQILADHFGSLDALAAASADEIDALEGIGPAIAASVAAYFARPESKALIAKLKRAGVRTEAQETARASRGNALAGKTFVITGTLPSMSREEASALITAHGGKVSGSVSKKTDYLVIGAEPGGTKFAKAQELGIPMIDEAGLLALIGSGRTADDQATPASDRRAATASVPPSDDAPGSPRQLDFDLT</sequence>
<gene>
    <name evidence="1" type="primary">ligA</name>
    <name type="ordered locus">RoseRS_4515</name>
</gene>
<organism>
    <name type="scientific">Roseiflexus sp. (strain RS-1)</name>
    <dbReference type="NCBI Taxonomy" id="357808"/>
    <lineage>
        <taxon>Bacteria</taxon>
        <taxon>Bacillati</taxon>
        <taxon>Chloroflexota</taxon>
        <taxon>Chloroflexia</taxon>
        <taxon>Chloroflexales</taxon>
        <taxon>Roseiflexineae</taxon>
        <taxon>Roseiflexaceae</taxon>
        <taxon>Roseiflexus</taxon>
    </lineage>
</organism>
<accession>A5V1U3</accession>
<reference key="1">
    <citation type="submission" date="2007-04" db="EMBL/GenBank/DDBJ databases">
        <title>Complete sequence of Roseiflexus sp. RS-1.</title>
        <authorList>
            <consortium name="US DOE Joint Genome Institute"/>
            <person name="Copeland A."/>
            <person name="Lucas S."/>
            <person name="Lapidus A."/>
            <person name="Barry K."/>
            <person name="Detter J.C."/>
            <person name="Glavina del Rio T."/>
            <person name="Hammon N."/>
            <person name="Israni S."/>
            <person name="Dalin E."/>
            <person name="Tice H."/>
            <person name="Pitluck S."/>
            <person name="Chertkov O."/>
            <person name="Brettin T."/>
            <person name="Bruce D."/>
            <person name="Han C."/>
            <person name="Schmutz J."/>
            <person name="Larimer F."/>
            <person name="Land M."/>
            <person name="Hauser L."/>
            <person name="Kyrpides N."/>
            <person name="Mikhailova N."/>
            <person name="Bryant D.A."/>
            <person name="Richardson P."/>
        </authorList>
    </citation>
    <scope>NUCLEOTIDE SEQUENCE [LARGE SCALE GENOMIC DNA]</scope>
    <source>
        <strain>RS-1</strain>
    </source>
</reference>
<name>DNLJ_ROSS1</name>
<keyword id="KW-0227">DNA damage</keyword>
<keyword id="KW-0234">DNA repair</keyword>
<keyword id="KW-0235">DNA replication</keyword>
<keyword id="KW-0436">Ligase</keyword>
<keyword id="KW-0460">Magnesium</keyword>
<keyword id="KW-0464">Manganese</keyword>
<keyword id="KW-0479">Metal-binding</keyword>
<keyword id="KW-0520">NAD</keyword>
<keyword id="KW-0862">Zinc</keyword>
<proteinExistence type="inferred from homology"/>
<evidence type="ECO:0000255" key="1">
    <source>
        <dbReference type="HAMAP-Rule" id="MF_01588"/>
    </source>
</evidence>
<evidence type="ECO:0000256" key="2">
    <source>
        <dbReference type="SAM" id="MobiDB-lite"/>
    </source>
</evidence>
<comment type="function">
    <text evidence="1">DNA ligase that catalyzes the formation of phosphodiester linkages between 5'-phosphoryl and 3'-hydroxyl groups in double-stranded DNA using NAD as a coenzyme and as the energy source for the reaction. It is essential for DNA replication and repair of damaged DNA.</text>
</comment>
<comment type="catalytic activity">
    <reaction evidence="1">
        <text>NAD(+) + (deoxyribonucleotide)n-3'-hydroxyl + 5'-phospho-(deoxyribonucleotide)m = (deoxyribonucleotide)n+m + AMP + beta-nicotinamide D-nucleotide.</text>
        <dbReference type="EC" id="6.5.1.2"/>
    </reaction>
</comment>
<comment type="cofactor">
    <cofactor evidence="1">
        <name>Mg(2+)</name>
        <dbReference type="ChEBI" id="CHEBI:18420"/>
    </cofactor>
    <cofactor evidence="1">
        <name>Mn(2+)</name>
        <dbReference type="ChEBI" id="CHEBI:29035"/>
    </cofactor>
</comment>
<comment type="similarity">
    <text evidence="1">Belongs to the NAD-dependent DNA ligase family. LigA subfamily.</text>
</comment>
<dbReference type="EC" id="6.5.1.2" evidence="1"/>
<dbReference type="EMBL" id="CP000686">
    <property type="protein sequence ID" value="ABQ92846.1"/>
    <property type="molecule type" value="Genomic_DNA"/>
</dbReference>
<dbReference type="RefSeq" id="WP_011959183.1">
    <property type="nucleotide sequence ID" value="NC_009523.1"/>
</dbReference>
<dbReference type="SMR" id="A5V1U3"/>
<dbReference type="STRING" id="357808.RoseRS_4515"/>
<dbReference type="KEGG" id="rrs:RoseRS_4515"/>
<dbReference type="eggNOG" id="COG0272">
    <property type="taxonomic scope" value="Bacteria"/>
</dbReference>
<dbReference type="HOGENOM" id="CLU_007764_2_1_0"/>
<dbReference type="OrthoDB" id="9759736at2"/>
<dbReference type="Proteomes" id="UP000006554">
    <property type="component" value="Chromosome"/>
</dbReference>
<dbReference type="GO" id="GO:0003677">
    <property type="term" value="F:DNA binding"/>
    <property type="evidence" value="ECO:0007669"/>
    <property type="project" value="InterPro"/>
</dbReference>
<dbReference type="GO" id="GO:0003911">
    <property type="term" value="F:DNA ligase (NAD+) activity"/>
    <property type="evidence" value="ECO:0007669"/>
    <property type="project" value="UniProtKB-UniRule"/>
</dbReference>
<dbReference type="GO" id="GO:0046872">
    <property type="term" value="F:metal ion binding"/>
    <property type="evidence" value="ECO:0007669"/>
    <property type="project" value="UniProtKB-KW"/>
</dbReference>
<dbReference type="GO" id="GO:0006281">
    <property type="term" value="P:DNA repair"/>
    <property type="evidence" value="ECO:0007669"/>
    <property type="project" value="UniProtKB-KW"/>
</dbReference>
<dbReference type="GO" id="GO:0006260">
    <property type="term" value="P:DNA replication"/>
    <property type="evidence" value="ECO:0007669"/>
    <property type="project" value="UniProtKB-KW"/>
</dbReference>
<dbReference type="CDD" id="cd00114">
    <property type="entry name" value="LIGANc"/>
    <property type="match status" value="1"/>
</dbReference>
<dbReference type="FunFam" id="1.10.150.20:FF:000006">
    <property type="entry name" value="DNA ligase"/>
    <property type="match status" value="1"/>
</dbReference>
<dbReference type="FunFam" id="1.10.150.20:FF:000007">
    <property type="entry name" value="DNA ligase"/>
    <property type="match status" value="1"/>
</dbReference>
<dbReference type="FunFam" id="1.10.287.610:FF:000002">
    <property type="entry name" value="DNA ligase"/>
    <property type="match status" value="1"/>
</dbReference>
<dbReference type="FunFam" id="2.40.50.140:FF:000012">
    <property type="entry name" value="DNA ligase"/>
    <property type="match status" value="1"/>
</dbReference>
<dbReference type="FunFam" id="3.30.470.30:FF:000001">
    <property type="entry name" value="DNA ligase"/>
    <property type="match status" value="1"/>
</dbReference>
<dbReference type="Gene3D" id="6.20.10.30">
    <property type="match status" value="1"/>
</dbReference>
<dbReference type="Gene3D" id="1.10.150.20">
    <property type="entry name" value="5' to 3' exonuclease, C-terminal subdomain"/>
    <property type="match status" value="2"/>
</dbReference>
<dbReference type="Gene3D" id="3.40.50.10190">
    <property type="entry name" value="BRCT domain"/>
    <property type="match status" value="1"/>
</dbReference>
<dbReference type="Gene3D" id="3.30.470.30">
    <property type="entry name" value="DNA ligase/mRNA capping enzyme"/>
    <property type="match status" value="1"/>
</dbReference>
<dbReference type="Gene3D" id="1.10.287.610">
    <property type="entry name" value="Helix hairpin bin"/>
    <property type="match status" value="1"/>
</dbReference>
<dbReference type="Gene3D" id="2.40.50.140">
    <property type="entry name" value="Nucleic acid-binding proteins"/>
    <property type="match status" value="1"/>
</dbReference>
<dbReference type="HAMAP" id="MF_01588">
    <property type="entry name" value="DNA_ligase_A"/>
    <property type="match status" value="1"/>
</dbReference>
<dbReference type="InterPro" id="IPR001357">
    <property type="entry name" value="BRCT_dom"/>
</dbReference>
<dbReference type="InterPro" id="IPR036420">
    <property type="entry name" value="BRCT_dom_sf"/>
</dbReference>
<dbReference type="InterPro" id="IPR041663">
    <property type="entry name" value="DisA/LigA_HHH"/>
</dbReference>
<dbReference type="InterPro" id="IPR001679">
    <property type="entry name" value="DNA_ligase"/>
</dbReference>
<dbReference type="InterPro" id="IPR018239">
    <property type="entry name" value="DNA_ligase_AS"/>
</dbReference>
<dbReference type="InterPro" id="IPR013839">
    <property type="entry name" value="DNAligase_adenylation"/>
</dbReference>
<dbReference type="InterPro" id="IPR013840">
    <property type="entry name" value="DNAligase_N"/>
</dbReference>
<dbReference type="InterPro" id="IPR003583">
    <property type="entry name" value="Hlx-hairpin-Hlx_DNA-bd_motif"/>
</dbReference>
<dbReference type="InterPro" id="IPR012340">
    <property type="entry name" value="NA-bd_OB-fold"/>
</dbReference>
<dbReference type="InterPro" id="IPR004150">
    <property type="entry name" value="NAD_DNA_ligase_OB"/>
</dbReference>
<dbReference type="InterPro" id="IPR010994">
    <property type="entry name" value="RuvA_2-like"/>
</dbReference>
<dbReference type="InterPro" id="IPR004149">
    <property type="entry name" value="Znf_DNAligase_C4"/>
</dbReference>
<dbReference type="NCBIfam" id="TIGR00575">
    <property type="entry name" value="dnlj"/>
    <property type="match status" value="1"/>
</dbReference>
<dbReference type="NCBIfam" id="NF005932">
    <property type="entry name" value="PRK07956.1"/>
    <property type="match status" value="1"/>
</dbReference>
<dbReference type="PANTHER" id="PTHR23389">
    <property type="entry name" value="CHROMOSOME TRANSMISSION FIDELITY FACTOR 18"/>
    <property type="match status" value="1"/>
</dbReference>
<dbReference type="PANTHER" id="PTHR23389:SF6">
    <property type="entry name" value="REPLICATION FACTOR C SUBUNIT 1"/>
    <property type="match status" value="1"/>
</dbReference>
<dbReference type="Pfam" id="PF00533">
    <property type="entry name" value="BRCT"/>
    <property type="match status" value="1"/>
</dbReference>
<dbReference type="Pfam" id="PF01653">
    <property type="entry name" value="DNA_ligase_aden"/>
    <property type="match status" value="1"/>
</dbReference>
<dbReference type="Pfam" id="PF03120">
    <property type="entry name" value="DNA_ligase_OB"/>
    <property type="match status" value="1"/>
</dbReference>
<dbReference type="Pfam" id="PF03119">
    <property type="entry name" value="DNA_ligase_ZBD"/>
    <property type="match status" value="1"/>
</dbReference>
<dbReference type="Pfam" id="PF12826">
    <property type="entry name" value="HHH_2"/>
    <property type="match status" value="1"/>
</dbReference>
<dbReference type="Pfam" id="PF14520">
    <property type="entry name" value="HHH_5"/>
    <property type="match status" value="1"/>
</dbReference>
<dbReference type="Pfam" id="PF22745">
    <property type="entry name" value="Nlig-Ia"/>
    <property type="match status" value="1"/>
</dbReference>
<dbReference type="PIRSF" id="PIRSF001604">
    <property type="entry name" value="LigA"/>
    <property type="match status" value="1"/>
</dbReference>
<dbReference type="SMART" id="SM00292">
    <property type="entry name" value="BRCT"/>
    <property type="match status" value="1"/>
</dbReference>
<dbReference type="SMART" id="SM00278">
    <property type="entry name" value="HhH1"/>
    <property type="match status" value="3"/>
</dbReference>
<dbReference type="SMART" id="SM00532">
    <property type="entry name" value="LIGANc"/>
    <property type="match status" value="1"/>
</dbReference>
<dbReference type="SUPFAM" id="SSF52113">
    <property type="entry name" value="BRCT domain"/>
    <property type="match status" value="1"/>
</dbReference>
<dbReference type="SUPFAM" id="SSF56091">
    <property type="entry name" value="DNA ligase/mRNA capping enzyme, catalytic domain"/>
    <property type="match status" value="1"/>
</dbReference>
<dbReference type="SUPFAM" id="SSF50249">
    <property type="entry name" value="Nucleic acid-binding proteins"/>
    <property type="match status" value="1"/>
</dbReference>
<dbReference type="SUPFAM" id="SSF47781">
    <property type="entry name" value="RuvA domain 2-like"/>
    <property type="match status" value="1"/>
</dbReference>
<dbReference type="PROSITE" id="PS50172">
    <property type="entry name" value="BRCT"/>
    <property type="match status" value="1"/>
</dbReference>
<dbReference type="PROSITE" id="PS01055">
    <property type="entry name" value="DNA_LIGASE_N1"/>
    <property type="match status" value="1"/>
</dbReference>